<evidence type="ECO:0000255" key="1">
    <source>
        <dbReference type="HAMAP-Rule" id="MF_01606"/>
    </source>
</evidence>
<dbReference type="EMBL" id="CP000822">
    <property type="protein sequence ID" value="ABV14702.1"/>
    <property type="molecule type" value="Genomic_DNA"/>
</dbReference>
<dbReference type="RefSeq" id="WP_012134400.1">
    <property type="nucleotide sequence ID" value="NC_009792.1"/>
</dbReference>
<dbReference type="SMR" id="A8AMI9"/>
<dbReference type="STRING" id="290338.CKO_03623"/>
<dbReference type="GeneID" id="45137337"/>
<dbReference type="KEGG" id="cko:CKO_03623"/>
<dbReference type="HOGENOM" id="CLU_076075_2_0_6"/>
<dbReference type="OrthoDB" id="9797132at2"/>
<dbReference type="Proteomes" id="UP000008148">
    <property type="component" value="Chromosome"/>
</dbReference>
<dbReference type="GO" id="GO:0005737">
    <property type="term" value="C:cytoplasm"/>
    <property type="evidence" value="ECO:0007669"/>
    <property type="project" value="UniProtKB-SubCell"/>
</dbReference>
<dbReference type="GO" id="GO:0046872">
    <property type="term" value="F:metal ion binding"/>
    <property type="evidence" value="ECO:0007669"/>
    <property type="project" value="UniProtKB-KW"/>
</dbReference>
<dbReference type="GO" id="GO:0030091">
    <property type="term" value="P:protein repair"/>
    <property type="evidence" value="ECO:0007669"/>
    <property type="project" value="UniProtKB-UniRule"/>
</dbReference>
<dbReference type="GO" id="GO:0051409">
    <property type="term" value="P:response to nitrosative stress"/>
    <property type="evidence" value="ECO:0007669"/>
    <property type="project" value="UniProtKB-UniRule"/>
</dbReference>
<dbReference type="GO" id="GO:0006979">
    <property type="term" value="P:response to oxidative stress"/>
    <property type="evidence" value="ECO:0007669"/>
    <property type="project" value="UniProtKB-UniRule"/>
</dbReference>
<dbReference type="CDD" id="cd12108">
    <property type="entry name" value="Hr-like"/>
    <property type="match status" value="1"/>
</dbReference>
<dbReference type="FunFam" id="1.20.120.520:FF:000001">
    <property type="entry name" value="Iron-sulfur cluster repair protein YtfE"/>
    <property type="match status" value="1"/>
</dbReference>
<dbReference type="Gene3D" id="1.20.120.520">
    <property type="entry name" value="nmb1532 protein domain like"/>
    <property type="match status" value="1"/>
</dbReference>
<dbReference type="HAMAP" id="MF_01606">
    <property type="entry name" value="RIC_YtfE"/>
    <property type="match status" value="1"/>
</dbReference>
<dbReference type="InterPro" id="IPR023742">
    <property type="entry name" value="FeS-repair_YftE"/>
</dbReference>
<dbReference type="InterPro" id="IPR012312">
    <property type="entry name" value="Hemerythrin-like"/>
</dbReference>
<dbReference type="InterPro" id="IPR019903">
    <property type="entry name" value="RIC_family"/>
</dbReference>
<dbReference type="NCBIfam" id="TIGR03652">
    <property type="entry name" value="FeS_repair_RIC"/>
    <property type="match status" value="1"/>
</dbReference>
<dbReference type="NCBIfam" id="NF008221">
    <property type="entry name" value="PRK10992.1"/>
    <property type="match status" value="1"/>
</dbReference>
<dbReference type="PANTHER" id="PTHR36438">
    <property type="entry name" value="IRON-SULFUR CLUSTER REPAIR PROTEIN YTFE"/>
    <property type="match status" value="1"/>
</dbReference>
<dbReference type="PANTHER" id="PTHR36438:SF1">
    <property type="entry name" value="IRON-SULFUR CLUSTER REPAIR PROTEIN YTFE"/>
    <property type="match status" value="1"/>
</dbReference>
<dbReference type="Pfam" id="PF01814">
    <property type="entry name" value="Hemerythrin"/>
    <property type="match status" value="1"/>
</dbReference>
<dbReference type="Pfam" id="PF04405">
    <property type="entry name" value="ScdA_N"/>
    <property type="match status" value="1"/>
</dbReference>
<reference key="1">
    <citation type="submission" date="2007-08" db="EMBL/GenBank/DDBJ databases">
        <authorList>
            <consortium name="The Citrobacter koseri Genome Sequencing Project"/>
            <person name="McClelland M."/>
            <person name="Sanderson E.K."/>
            <person name="Porwollik S."/>
            <person name="Spieth J."/>
            <person name="Clifton W.S."/>
            <person name="Latreille P."/>
            <person name="Courtney L."/>
            <person name="Wang C."/>
            <person name="Pepin K."/>
            <person name="Bhonagiri V."/>
            <person name="Nash W."/>
            <person name="Johnson M."/>
            <person name="Thiruvilangam P."/>
            <person name="Wilson R."/>
        </authorList>
    </citation>
    <scope>NUCLEOTIDE SEQUENCE [LARGE SCALE GENOMIC DNA]</scope>
    <source>
        <strain>ATCC BAA-895 / CDC 4225-83 / SGSC4696</strain>
    </source>
</reference>
<comment type="function">
    <text evidence="1">Di-iron-containing protein involved in the repair of iron-sulfur clusters damaged by oxidative and nitrosative stress conditions.</text>
</comment>
<comment type="subunit">
    <text evidence="1">Homodimer.</text>
</comment>
<comment type="subcellular location">
    <subcellularLocation>
        <location evidence="1">Cytoplasm</location>
    </subcellularLocation>
</comment>
<comment type="similarity">
    <text evidence="1">Belongs to the RIC family. YtfE subfamily.</text>
</comment>
<accession>A8AMI9</accession>
<protein>
    <recommendedName>
        <fullName evidence="1">Iron-sulfur cluster repair protein YtfE</fullName>
    </recommendedName>
</protein>
<proteinExistence type="inferred from homology"/>
<organism>
    <name type="scientific">Citrobacter koseri (strain ATCC BAA-895 / CDC 4225-83 / SGSC4696)</name>
    <dbReference type="NCBI Taxonomy" id="290338"/>
    <lineage>
        <taxon>Bacteria</taxon>
        <taxon>Pseudomonadati</taxon>
        <taxon>Pseudomonadota</taxon>
        <taxon>Gammaproteobacteria</taxon>
        <taxon>Enterobacterales</taxon>
        <taxon>Enterobacteriaceae</taxon>
        <taxon>Citrobacter</taxon>
    </lineage>
</organism>
<sequence>MSFRDQPLGELALSIPRASALFRKYDMDYCCGGKQTLARAAARKELDVEAIEAELAQLAEQPIEKDWRTAPLAEIIDHIIVRYHDRHREQLPELILQATKVERVHADKPSVPKGLAKYLTMLHQELSSHMMKEEQILFPMIKQGMGSQAMGPISVMESEHDDAGELLEVIKHTTNNVTPPPEACTTWKAMYNGINEMIDDLMEHISLENNVLFPRALAGE</sequence>
<gene>
    <name evidence="1" type="primary">ytfE</name>
    <name type="ordered locus">CKO_03623</name>
</gene>
<keyword id="KW-0963">Cytoplasm</keyword>
<keyword id="KW-0408">Iron</keyword>
<keyword id="KW-0479">Metal-binding</keyword>
<keyword id="KW-1185">Reference proteome</keyword>
<keyword id="KW-0346">Stress response</keyword>
<feature type="chain" id="PRO_1000069415" description="Iron-sulfur cluster repair protein YtfE">
    <location>
        <begin position="1"/>
        <end position="220"/>
    </location>
</feature>
<name>YTFE_CITK8</name>